<proteinExistence type="evidence at transcript level"/>
<keyword id="KW-0273">Eye lens protein</keyword>
<keyword id="KW-0677">Repeat</keyword>
<dbReference type="EMBL" id="X02767">
    <property type="protein sequence ID" value="CAA26544.1"/>
    <property type="molecule type" value="mRNA"/>
</dbReference>
<dbReference type="EMBL" id="X06421">
    <property type="protein sequence ID" value="CAA29730.1"/>
    <property type="molecule type" value="mRNA"/>
</dbReference>
<dbReference type="PIR" id="S01608">
    <property type="entry name" value="S01608"/>
</dbReference>
<dbReference type="SMR" id="P07317"/>
<dbReference type="GO" id="GO:0005212">
    <property type="term" value="F:structural constituent of eye lens"/>
    <property type="evidence" value="ECO:0007669"/>
    <property type="project" value="UniProtKB-KW"/>
</dbReference>
<dbReference type="GO" id="GO:0002088">
    <property type="term" value="P:lens development in camera-type eye"/>
    <property type="evidence" value="ECO:0007669"/>
    <property type="project" value="TreeGrafter"/>
</dbReference>
<dbReference type="GO" id="GO:0007601">
    <property type="term" value="P:visual perception"/>
    <property type="evidence" value="ECO:0007669"/>
    <property type="project" value="TreeGrafter"/>
</dbReference>
<dbReference type="FunFam" id="2.60.20.10:FF:000004">
    <property type="entry name" value="Crystallin beta A4"/>
    <property type="match status" value="1"/>
</dbReference>
<dbReference type="FunFam" id="2.60.20.10:FF:000002">
    <property type="entry name" value="Crystallin, beta B2"/>
    <property type="match status" value="1"/>
</dbReference>
<dbReference type="Gene3D" id="2.60.20.10">
    <property type="entry name" value="Crystallins"/>
    <property type="match status" value="2"/>
</dbReference>
<dbReference type="InterPro" id="IPR050252">
    <property type="entry name" value="Beta/Gamma-Crystallin"/>
</dbReference>
<dbReference type="InterPro" id="IPR001064">
    <property type="entry name" value="Beta/gamma_crystallin"/>
</dbReference>
<dbReference type="InterPro" id="IPR011024">
    <property type="entry name" value="G_crystallin-like"/>
</dbReference>
<dbReference type="PANTHER" id="PTHR11818:SF8">
    <property type="entry name" value="BETA-CRYSTALLIN A3"/>
    <property type="match status" value="1"/>
</dbReference>
<dbReference type="PANTHER" id="PTHR11818">
    <property type="entry name" value="BETA/GAMMA CRYSTALLIN"/>
    <property type="match status" value="1"/>
</dbReference>
<dbReference type="Pfam" id="PF00030">
    <property type="entry name" value="Crystall"/>
    <property type="match status" value="2"/>
</dbReference>
<dbReference type="PRINTS" id="PR01367">
    <property type="entry name" value="BGCRYSTALLIN"/>
</dbReference>
<dbReference type="SMART" id="SM00247">
    <property type="entry name" value="XTALbg"/>
    <property type="match status" value="2"/>
</dbReference>
<dbReference type="SUPFAM" id="SSF49695">
    <property type="entry name" value="gamma-Crystallin-like"/>
    <property type="match status" value="1"/>
</dbReference>
<dbReference type="PROSITE" id="PS50915">
    <property type="entry name" value="CRYSTALLIN_BETA_GAMMA"/>
    <property type="match status" value="4"/>
</dbReference>
<accession>P07317</accession>
<reference key="1">
    <citation type="journal article" date="1987" name="Biochim. Biophys. Acta">
        <title>Frog lens beta A1-crystallin: the nucleotide sequence of the cloned cDNA and computer graphics modelling of the three-dimensional structure.</title>
        <authorList>
            <person name="Luchin S.V."/>
            <person name="Zinovieva R.D."/>
            <person name="Tomarev S.I."/>
            <person name="Dolgilevich S.M."/>
            <person name="Gause G.G. Jr."/>
            <person name="Bax J.B."/>
            <person name="Driessen H.P.C."/>
            <person name="Blundell T.L."/>
        </authorList>
    </citation>
    <scope>NUCLEOTIDE SEQUENCE [MRNA]</scope>
    <source>
        <tissue>Lens</tissue>
    </source>
</reference>
<reference key="2">
    <citation type="journal article" date="1985" name="Dokl. Biochem.">
        <title>Isolation and structure of a clone of recombinant cDNA encoding beta-crystallin of the eye lens of the frog Rana temporaria.</title>
        <authorList>
            <person name="Luchin S.V."/>
            <person name="Tomarev S.I."/>
            <person name="Dolgilevich S.M."/>
            <person name="Kraev A.S."/>
            <person name="Sryabin K.G."/>
            <person name="Gause G.G. Jr."/>
        </authorList>
    </citation>
    <scope>NUCLEOTIDE SEQUENCE [MRNA]</scope>
</reference>
<evidence type="ECO:0000250" key="1"/>
<evidence type="ECO:0000255" key="2">
    <source>
        <dbReference type="PROSITE-ProRule" id="PRU00028"/>
    </source>
</evidence>
<evidence type="ECO:0000305" key="3"/>
<comment type="function">
    <text>Crystallins are the dominant structural components of the vertebrate eye lens.</text>
</comment>
<comment type="subunit">
    <text evidence="1">Homo/heterodimer, or complexes of higher-order. The structure of beta-crystallin oligomers seems to be stabilized through interactions between the N-terminal arms (By similarity).</text>
</comment>
<comment type="domain">
    <text>Has a two-domain beta-structure, folded into four very similar Greek key motifs.</text>
</comment>
<comment type="similarity">
    <text evidence="3">Belongs to the beta/gamma-crystallin family.</text>
</comment>
<protein>
    <recommendedName>
        <fullName>Beta-crystallin A1</fullName>
    </recommendedName>
</protein>
<sequence>MAQINPLPVPLGPWKITVYDQENFQGKRMEFTSSCANIMECGFDNIRSLKVECGGWIGYEHTSFCGQQFVLERGEYPRWDAWSGSNAYHIERLMSFRPICSANHKESKLVIFEKENFIGRQWEMCDDYPSLQAMGWVNNEVGSMKVQCGSWVCYQYPGYRGYQYILESDHHGGEYKHWREWGSHAQTFQIQSIRRIQQ</sequence>
<name>CRBA1_RANTE</name>
<organism>
    <name type="scientific">Rana temporaria</name>
    <name type="common">European common frog</name>
    <dbReference type="NCBI Taxonomy" id="8407"/>
    <lineage>
        <taxon>Eukaryota</taxon>
        <taxon>Metazoa</taxon>
        <taxon>Chordata</taxon>
        <taxon>Craniata</taxon>
        <taxon>Vertebrata</taxon>
        <taxon>Euteleostomi</taxon>
        <taxon>Amphibia</taxon>
        <taxon>Batrachia</taxon>
        <taxon>Anura</taxon>
        <taxon>Neobatrachia</taxon>
        <taxon>Ranoidea</taxon>
        <taxon>Ranidae</taxon>
        <taxon>Rana</taxon>
        <taxon>Rana</taxon>
    </lineage>
</organism>
<feature type="chain" id="PRO_0000057537" description="Beta-crystallin A1">
    <location>
        <begin position="1"/>
        <end position="198"/>
    </location>
</feature>
<feature type="domain" description="Beta/gamma crystallin 'Greek key' 1" evidence="2">
    <location>
        <begin position="14"/>
        <end position="53"/>
    </location>
</feature>
<feature type="domain" description="Beta/gamma crystallin 'Greek key' 2" evidence="2">
    <location>
        <begin position="54"/>
        <end position="100"/>
    </location>
</feature>
<feature type="domain" description="Beta/gamma crystallin 'Greek key' 3" evidence="2">
    <location>
        <begin position="107"/>
        <end position="148"/>
    </location>
</feature>
<feature type="domain" description="Beta/gamma crystallin 'Greek key' 4" evidence="2">
    <location>
        <begin position="149"/>
        <end position="197"/>
    </location>
</feature>
<feature type="region of interest" description="N-terminal arm">
    <location>
        <begin position="1"/>
        <end position="13"/>
    </location>
</feature>
<feature type="region of interest" description="Connecting peptide">
    <location>
        <begin position="101"/>
        <end position="106"/>
    </location>
</feature>
<feature type="sequence variant">
    <original>M</original>
    <variation>R</variation>
    <location>
        <position position="144"/>
    </location>
</feature>